<dbReference type="PIR" id="A59136">
    <property type="entry name" value="A59136"/>
</dbReference>
<dbReference type="PDB" id="1JE9">
    <property type="method" value="NMR"/>
    <property type="chains" value="A=1-61"/>
</dbReference>
<dbReference type="PDBsum" id="1JE9"/>
<dbReference type="BMRB" id="P59276"/>
<dbReference type="SMR" id="P59276"/>
<dbReference type="EvolutionaryTrace" id="P59276"/>
<dbReference type="GO" id="GO:0005576">
    <property type="term" value="C:extracellular region"/>
    <property type="evidence" value="ECO:0007669"/>
    <property type="project" value="UniProtKB-SubCell"/>
</dbReference>
<dbReference type="GO" id="GO:0099106">
    <property type="term" value="F:ion channel regulator activity"/>
    <property type="evidence" value="ECO:0007669"/>
    <property type="project" value="UniProtKB-KW"/>
</dbReference>
<dbReference type="GO" id="GO:0090729">
    <property type="term" value="F:toxin activity"/>
    <property type="evidence" value="ECO:0007669"/>
    <property type="project" value="UniProtKB-KW"/>
</dbReference>
<dbReference type="CDD" id="cd00206">
    <property type="entry name" value="TFP_snake_toxin"/>
    <property type="match status" value="1"/>
</dbReference>
<dbReference type="FunFam" id="2.10.60.10:FF:000024">
    <property type="entry name" value="Cytotoxin 1"/>
    <property type="match status" value="1"/>
</dbReference>
<dbReference type="Gene3D" id="2.10.60.10">
    <property type="entry name" value="CD59"/>
    <property type="match status" value="1"/>
</dbReference>
<dbReference type="InterPro" id="IPR003571">
    <property type="entry name" value="Snake_3FTx"/>
</dbReference>
<dbReference type="InterPro" id="IPR045860">
    <property type="entry name" value="Snake_toxin-like_sf"/>
</dbReference>
<dbReference type="InterPro" id="IPR018354">
    <property type="entry name" value="Snake_toxin_con_site"/>
</dbReference>
<dbReference type="InterPro" id="IPR054131">
    <property type="entry name" value="Toxin_cobra-type"/>
</dbReference>
<dbReference type="Pfam" id="PF21947">
    <property type="entry name" value="Toxin_cobra-type"/>
    <property type="match status" value="1"/>
</dbReference>
<dbReference type="SUPFAM" id="SSF57302">
    <property type="entry name" value="Snake toxin-like"/>
    <property type="match status" value="1"/>
</dbReference>
<dbReference type="PROSITE" id="PS00272">
    <property type="entry name" value="SNAKE_TOXIN"/>
    <property type="match status" value="1"/>
</dbReference>
<comment type="function">
    <text evidence="2 6">Produces peripheral paralysis by blocking neuromuscular transmission at the postsynaptic site. Binds to the nicotinic acetylcholine receptor.</text>
</comment>
<comment type="subcellular location">
    <subcellularLocation>
        <location evidence="2">Secreted</location>
    </subcellularLocation>
</comment>
<comment type="tissue specificity">
    <text evidence="5">Expressed by the venom gland.</text>
</comment>
<comment type="toxic dose">
    <text evidence="2">LD(50) is 80 mg/kg by intraperitoneal injection into mice.</text>
</comment>
<comment type="miscellaneous">
    <text evidence="1">It inhibits muscle contraction with an IC(50) of 0.20 ug/ml.</text>
</comment>
<comment type="similarity">
    <text evidence="5">Belongs to the three-finger toxin family. Short-chain subfamily. Type I alpha-neurotoxin sub-subfamily.</text>
</comment>
<accession>P59276</accession>
<feature type="chain" id="PRO_0000093593" description="Cobrotoxin-c" evidence="2">
    <location>
        <begin position="1"/>
        <end position="61"/>
    </location>
</feature>
<feature type="site" description="May be the main cause for the toxicity difference between this toxin and cobrotoxin-b">
    <location>
        <position position="56"/>
    </location>
</feature>
<feature type="disulfide bond" evidence="1 7">
    <location>
        <begin position="3"/>
        <end position="23"/>
    </location>
</feature>
<feature type="disulfide bond" evidence="1 7">
    <location>
        <begin position="17"/>
        <end position="40"/>
    </location>
</feature>
<feature type="disulfide bond" evidence="1 7">
    <location>
        <begin position="42"/>
        <end position="53"/>
    </location>
</feature>
<feature type="disulfide bond" evidence="1 7">
    <location>
        <begin position="54"/>
        <end position="59"/>
    </location>
</feature>
<feature type="strand" evidence="8">
    <location>
        <begin position="2"/>
        <end position="4"/>
    </location>
</feature>
<feature type="strand" evidence="8">
    <location>
        <begin position="14"/>
        <end position="16"/>
    </location>
</feature>
<feature type="strand" evidence="8">
    <location>
        <begin position="23"/>
        <end position="30"/>
    </location>
</feature>
<feature type="strand" evidence="8">
    <location>
        <begin position="33"/>
        <end position="41"/>
    </location>
</feature>
<feature type="strand" evidence="8">
    <location>
        <begin position="50"/>
        <end position="54"/>
    </location>
</feature>
<feature type="turn" evidence="8">
    <location>
        <begin position="57"/>
        <end position="60"/>
    </location>
</feature>
<name>3S1C_NAJKA</name>
<organism>
    <name type="scientific">Naja kaouthia</name>
    <name type="common">Monocled cobra</name>
    <name type="synonym">Naja siamensis</name>
    <dbReference type="NCBI Taxonomy" id="8649"/>
    <lineage>
        <taxon>Eukaryota</taxon>
        <taxon>Metazoa</taxon>
        <taxon>Chordata</taxon>
        <taxon>Craniata</taxon>
        <taxon>Vertebrata</taxon>
        <taxon>Euteleostomi</taxon>
        <taxon>Lepidosauria</taxon>
        <taxon>Squamata</taxon>
        <taxon>Bifurcata</taxon>
        <taxon>Unidentata</taxon>
        <taxon>Episquamata</taxon>
        <taxon>Toxicofera</taxon>
        <taxon>Serpentes</taxon>
        <taxon>Colubroidea</taxon>
        <taxon>Elapidae</taxon>
        <taxon>Elapinae</taxon>
        <taxon>Naja</taxon>
    </lineage>
</organism>
<sequence length="61" mass="6859">LECHNQQSSQAPTTKTCSGETNCYKKWWSDHRGTIIERGCGCPKVKPGVNLNCCRTDRCNN</sequence>
<proteinExistence type="evidence at protein level"/>
<protein>
    <recommendedName>
        <fullName evidence="4">Cobrotoxin-c</fullName>
        <shortName evidence="4">CBT-c</shortName>
    </recommendedName>
    <alternativeName>
        <fullName evidence="3">Short neurotoxin II</fullName>
        <shortName evidence="3">NT2</shortName>
    </alternativeName>
</protein>
<evidence type="ECO:0000269" key="1">
    <source>
    </source>
</evidence>
<evidence type="ECO:0000269" key="2">
    <source>
    </source>
</evidence>
<evidence type="ECO:0000303" key="3">
    <source>
    </source>
</evidence>
<evidence type="ECO:0000303" key="4">
    <source>
    </source>
</evidence>
<evidence type="ECO:0000305" key="5"/>
<evidence type="ECO:0000305" key="6">
    <source>
    </source>
</evidence>
<evidence type="ECO:0000312" key="7">
    <source>
        <dbReference type="PDB" id="1JE9"/>
    </source>
</evidence>
<evidence type="ECO:0007829" key="8">
    <source>
        <dbReference type="PDB" id="1JE9"/>
    </source>
</evidence>
<keyword id="KW-0002">3D-structure</keyword>
<keyword id="KW-0903">Direct protein sequencing</keyword>
<keyword id="KW-1015">Disulfide bond</keyword>
<keyword id="KW-0872">Ion channel impairing toxin</keyword>
<keyword id="KW-0528">Neurotoxin</keyword>
<keyword id="KW-0629">Postsynaptic neurotoxin</keyword>
<keyword id="KW-0964">Secreted</keyword>
<keyword id="KW-0800">Toxin</keyword>
<reference key="1">
    <citation type="journal article" date="2002" name="Comp. Biochem. Physiol.">
        <title>A novel short neurotoxin, cobrotoxin c, from monocellate cobra (Naja kaouthia) venom: isolation and purification, primary and secondary structure determination, and tertiary structure modeling.</title>
        <authorList>
            <person name="Meng Q.-X."/>
            <person name="Wang W.-Y."/>
            <person name="Lu Q.-M."/>
            <person name="Jin Y."/>
            <person name="Wei J.-F."/>
            <person name="Zhu S.-W."/>
            <person name="Xiong Y.-L."/>
        </authorList>
    </citation>
    <scope>PROTEIN SEQUENCE</scope>
    <scope>TOXIC DOSE</scope>
    <scope>SUBCELLULAR LOCATION</scope>
    <source>
        <tissue>Venom</tissue>
    </source>
</reference>
<reference key="2">
    <citation type="journal article" date="2002" name="Biochim. Biophys. Acta">
        <title>Structure-function relationship of three neurotoxins from the venom of Naja kaouthia: a comparison between the NMR-derived structure of NT2 with its homologues, NT1 and NT3.</title>
        <authorList>
            <person name="Cheng Y."/>
            <person name="Meng Q.-X."/>
            <person name="Wang W.-Y."/>
            <person name="Wang J."/>
        </authorList>
    </citation>
    <scope>STRUCTURE BY NMR</scope>
    <scope>DISULFIDE BONDS</scope>
    <scope>INHIBITORY CONCENTRATION</scope>
</reference>